<name>KUN2_RHIHE</name>
<feature type="signal peptide" evidence="1">
    <location>
        <begin position="1"/>
        <end position="20"/>
    </location>
</feature>
<feature type="chain" id="PRO_5003706419" description="Anticoagulant protein rhipilin-2">
    <location>
        <begin position="21"/>
        <end position="195"/>
    </location>
</feature>
<feature type="domain" description="BPTI/Kunitz inhibitor" evidence="2">
    <location>
        <begin position="26"/>
        <end position="87"/>
    </location>
</feature>
<feature type="disulfide bond" evidence="2">
    <location>
        <begin position="26"/>
        <end position="87"/>
    </location>
</feature>
<feature type="disulfide bond" evidence="2">
    <location>
        <begin position="39"/>
        <end position="70"/>
    </location>
</feature>
<feature type="disulfide bond" evidence="2">
    <location>
        <begin position="62"/>
        <end position="83"/>
    </location>
</feature>
<accession>I6VXS1</accession>
<organism>
    <name type="scientific">Rhipicephalus haemaphysaloides</name>
    <name type="common">Tick</name>
    <dbReference type="NCBI Taxonomy" id="237073"/>
    <lineage>
        <taxon>Eukaryota</taxon>
        <taxon>Metazoa</taxon>
        <taxon>Ecdysozoa</taxon>
        <taxon>Arthropoda</taxon>
        <taxon>Chelicerata</taxon>
        <taxon>Arachnida</taxon>
        <taxon>Acari</taxon>
        <taxon>Parasitiformes</taxon>
        <taxon>Ixodida</taxon>
        <taxon>Ixodoidea</taxon>
        <taxon>Ixodidae</taxon>
        <taxon>Rhipicephalinae</taxon>
        <taxon>Rhipicephalus</taxon>
        <taxon>Rhipicephalus</taxon>
    </lineage>
</organism>
<keyword id="KW-1203">Blood coagulation cascade inhibiting toxin</keyword>
<keyword id="KW-1015">Disulfide bond</keyword>
<keyword id="KW-1199">Hemostasis impairing toxin</keyword>
<keyword id="KW-0646">Protease inhibitor</keyword>
<keyword id="KW-0964">Secreted</keyword>
<keyword id="KW-0722">Serine protease inhibitor</keyword>
<keyword id="KW-0732">Signal</keyword>
<keyword id="KW-0800">Toxin</keyword>
<dbReference type="EMBL" id="JQ812616">
    <property type="protein sequence ID" value="AFN22082.1"/>
    <property type="molecule type" value="mRNA"/>
</dbReference>
<dbReference type="SMR" id="I6VXS1"/>
<dbReference type="GO" id="GO:0005615">
    <property type="term" value="C:extracellular space"/>
    <property type="evidence" value="ECO:0007669"/>
    <property type="project" value="TreeGrafter"/>
</dbReference>
<dbReference type="GO" id="GO:0004867">
    <property type="term" value="F:serine-type endopeptidase inhibitor activity"/>
    <property type="evidence" value="ECO:0007669"/>
    <property type="project" value="UniProtKB-KW"/>
</dbReference>
<dbReference type="GO" id="GO:0090729">
    <property type="term" value="F:toxin activity"/>
    <property type="evidence" value="ECO:0007669"/>
    <property type="project" value="UniProtKB-KW"/>
</dbReference>
<dbReference type="GO" id="GO:0044562">
    <property type="term" value="P:envenomation resulting in negative regulation of voltage-gated potassium channel activity in another organism"/>
    <property type="evidence" value="ECO:0007669"/>
    <property type="project" value="UniProtKB-ARBA"/>
</dbReference>
<dbReference type="CDD" id="cd00109">
    <property type="entry name" value="Kunitz-type"/>
    <property type="match status" value="1"/>
</dbReference>
<dbReference type="Gene3D" id="4.10.410.10">
    <property type="entry name" value="Pancreatic trypsin inhibitor Kunitz domain"/>
    <property type="match status" value="1"/>
</dbReference>
<dbReference type="InterPro" id="IPR002223">
    <property type="entry name" value="Kunitz_BPTI"/>
</dbReference>
<dbReference type="InterPro" id="IPR036880">
    <property type="entry name" value="Kunitz_BPTI_sf"/>
</dbReference>
<dbReference type="InterPro" id="IPR020901">
    <property type="entry name" value="Prtase_inh_Kunz-CS"/>
</dbReference>
<dbReference type="InterPro" id="IPR050098">
    <property type="entry name" value="TFPI/VKTCI-like"/>
</dbReference>
<dbReference type="PANTHER" id="PTHR10083:SF374">
    <property type="entry name" value="BPTI_KUNITZ INHIBITOR DOMAIN-CONTAINING PROTEIN"/>
    <property type="match status" value="1"/>
</dbReference>
<dbReference type="PANTHER" id="PTHR10083">
    <property type="entry name" value="KUNITZ-TYPE PROTEASE INHIBITOR-RELATED"/>
    <property type="match status" value="1"/>
</dbReference>
<dbReference type="Pfam" id="PF00014">
    <property type="entry name" value="Kunitz_BPTI"/>
    <property type="match status" value="1"/>
</dbReference>
<dbReference type="PRINTS" id="PR00759">
    <property type="entry name" value="BASICPTASE"/>
</dbReference>
<dbReference type="SMART" id="SM00131">
    <property type="entry name" value="KU"/>
    <property type="match status" value="1"/>
</dbReference>
<dbReference type="SUPFAM" id="SSF57362">
    <property type="entry name" value="BPTI-like"/>
    <property type="match status" value="1"/>
</dbReference>
<dbReference type="PROSITE" id="PS00280">
    <property type="entry name" value="BPTI_KUNITZ_1"/>
    <property type="match status" value="1"/>
</dbReference>
<dbReference type="PROSITE" id="PS50279">
    <property type="entry name" value="BPTI_KUNITZ_2"/>
    <property type="match status" value="1"/>
</dbReference>
<comment type="function">
    <text evidence="3">Anticoagulant protein that inhibits the serine proteases trypsin and elastase, but not thrombin (PubMed:25708749). The anticoagulant effect of this recombinant protein on blood clotting is found only in the activated partial thromboplastin time (APTT) assays, but not in the prothrombin time (PT) assays (PubMed:25708749).</text>
</comment>
<comment type="subcellular location">
    <subcellularLocation>
        <location evidence="5">Secreted</location>
    </subcellularLocation>
</comment>
<comment type="tissue specificity">
    <text evidence="3">Primarily expressed in salivary glands and weakly expressed in the midgut of fed ticks.</text>
</comment>
<comment type="induction">
    <text evidence="3">By blood feeding. Expression is most important during the early stage of feeding.</text>
</comment>
<protein>
    <recommendedName>
        <fullName evidence="4">Anticoagulant protein rhipilin-2</fullName>
    </recommendedName>
</protein>
<evidence type="ECO:0000255" key="1"/>
<evidence type="ECO:0000255" key="2">
    <source>
        <dbReference type="PROSITE-ProRule" id="PRU00031"/>
    </source>
</evidence>
<evidence type="ECO:0000269" key="3">
    <source>
    </source>
</evidence>
<evidence type="ECO:0000303" key="4">
    <source>
    </source>
</evidence>
<evidence type="ECO:0000305" key="5"/>
<evidence type="ECO:0000312" key="6">
    <source>
        <dbReference type="EMBL" id="AFN22082.1"/>
    </source>
</evidence>
<reference evidence="6" key="1">
    <citation type="journal article" date="2013" name="Arch. Insect Biochem. Physiol.">
        <title>Characterization of a new Kunitz-type serine protease inhibitor from the hard tick Rhipicephalus hemaphysaloides.</title>
        <authorList>
            <person name="Cao J."/>
            <person name="Shi L."/>
            <person name="Zhou Y."/>
            <person name="Gao X."/>
            <person name="Zhang H."/>
            <person name="Gong H."/>
            <person name="Zhou J."/>
        </authorList>
    </citation>
    <scope>NUCLEOTIDE SEQUENCE [MRNA]</scope>
    <scope>FUNCTION</scope>
    <scope>INDUCTION BY BLOOD FEEDING</scope>
    <scope>TISSUE SPECIFICITY</scope>
    <scope>RECOMBINANT EXPRESSION</scope>
    <source>
        <tissue>Salivary gland</tissue>
    </source>
</reference>
<proteinExistence type="evidence at transcript level"/>
<sequence>MVLCCFALLITAVLVASKGAEEKPTCDPDHENKKVLWTCWTDDYNTTCFERSFYYNRQTDRCEEFLYEGCGGNDNNFPSIEDCLSNCKTNMTDYEIKFFQRLNKTLSCTSTYEKGSISRYILNETSQECQRADVKNGDIHFPSFRKCVYDCKPNSTSNPYCNSIKENGTKPRAPWNCYRQDGYKALFCYKPKNSK</sequence>